<protein>
    <recommendedName>
        <fullName>Cyclin-dependent kinase inhibitor 2</fullName>
    </recommendedName>
    <alternativeName>
        <fullName>KIP-related protein 2</fullName>
    </alternativeName>
</protein>
<reference key="1">
    <citation type="journal article" date="2006" name="Plant Physiol.">
        <title>The cyclin-dependent kinase inhibitor Orysa;KRP1 plays an important role in seed development of rice.</title>
        <authorList>
            <person name="Barroco R.M."/>
            <person name="Peres A."/>
            <person name="Droual A.-M."/>
            <person name="de Veylder L."/>
            <person name="Nguyen L.S.L."/>
            <person name="de Wolf J."/>
            <person name="Mironov V."/>
            <person name="Peerbolte R."/>
            <person name="Beemster G.T.S."/>
            <person name="Inze D."/>
            <person name="Broekaert W.F."/>
            <person name="Frankard V."/>
        </authorList>
    </citation>
    <scope>NUCLEOTIDE SEQUENCE [MRNA]</scope>
</reference>
<reference key="2">
    <citation type="journal article" date="2005" name="Nature">
        <title>The map-based sequence of the rice genome.</title>
        <authorList>
            <consortium name="International rice genome sequencing project (IRGSP)"/>
        </authorList>
    </citation>
    <scope>NUCLEOTIDE SEQUENCE [LARGE SCALE GENOMIC DNA]</scope>
    <source>
        <strain>cv. Nipponbare</strain>
    </source>
</reference>
<reference key="3">
    <citation type="journal article" date="2013" name="Rice">
        <title>Improvement of the Oryza sativa Nipponbare reference genome using next generation sequence and optical map data.</title>
        <authorList>
            <person name="Kawahara Y."/>
            <person name="de la Bastide M."/>
            <person name="Hamilton J.P."/>
            <person name="Kanamori H."/>
            <person name="McCombie W.R."/>
            <person name="Ouyang S."/>
            <person name="Schwartz D.C."/>
            <person name="Tanaka T."/>
            <person name="Wu J."/>
            <person name="Zhou S."/>
            <person name="Childs K.L."/>
            <person name="Davidson R.M."/>
            <person name="Lin H."/>
            <person name="Quesada-Ocampo L."/>
            <person name="Vaillancourt B."/>
            <person name="Sakai H."/>
            <person name="Lee S.S."/>
            <person name="Kim J."/>
            <person name="Numa H."/>
            <person name="Itoh T."/>
            <person name="Buell C.R."/>
            <person name="Matsumoto T."/>
        </authorList>
    </citation>
    <scope>GENOME REANNOTATION</scope>
    <source>
        <strain>cv. Nipponbare</strain>
    </source>
</reference>
<reference key="4">
    <citation type="journal article" date="2007" name="Plant Mol. Biol.">
        <title>Genome-wide identification and expression analysis of rice cell cycle genes.</title>
        <authorList>
            <person name="Guo J."/>
            <person name="Song J."/>
            <person name="Wang F."/>
            <person name="Zhang X.S."/>
        </authorList>
    </citation>
    <scope>GENE FAMILY</scope>
</reference>
<proteinExistence type="evidence at transcript level"/>
<organism>
    <name type="scientific">Oryza sativa subsp. japonica</name>
    <name type="common">Rice</name>
    <dbReference type="NCBI Taxonomy" id="39947"/>
    <lineage>
        <taxon>Eukaryota</taxon>
        <taxon>Viridiplantae</taxon>
        <taxon>Streptophyta</taxon>
        <taxon>Embryophyta</taxon>
        <taxon>Tracheophyta</taxon>
        <taxon>Spermatophyta</taxon>
        <taxon>Magnoliopsida</taxon>
        <taxon>Liliopsida</taxon>
        <taxon>Poales</taxon>
        <taxon>Poaceae</taxon>
        <taxon>BOP clade</taxon>
        <taxon>Oryzoideae</taxon>
        <taxon>Oryzeae</taxon>
        <taxon>Oryzinae</taxon>
        <taxon>Oryza</taxon>
        <taxon>Oryza sativa</taxon>
    </lineage>
</organism>
<comment type="similarity">
    <text evidence="2">Belongs to the CDI family. ICK/KRP subfamily.</text>
</comment>
<comment type="sequence caution" evidence="2">
    <conflict type="erroneous gene model prediction">
        <sequence resource="EMBL-CDS" id="BAD35196"/>
    </conflict>
</comment>
<comment type="sequence caution" evidence="2">
    <conflict type="erroneous gene model prediction">
        <sequence resource="EMBL-CDS" id="BAD35299"/>
    </conflict>
</comment>
<dbReference type="EMBL" id="DQ229363">
    <property type="protein sequence ID" value="ABB70059.1"/>
    <property type="molecule type" value="mRNA"/>
</dbReference>
<dbReference type="EMBL" id="AP003458">
    <property type="protein sequence ID" value="BAD35196.1"/>
    <property type="status" value="ALT_SEQ"/>
    <property type="molecule type" value="Genomic_DNA"/>
</dbReference>
<dbReference type="EMBL" id="AP003525">
    <property type="protein sequence ID" value="BAD35299.1"/>
    <property type="status" value="ALT_SEQ"/>
    <property type="molecule type" value="Genomic_DNA"/>
</dbReference>
<dbReference type="EMBL" id="AP014962">
    <property type="protein sequence ID" value="BAS96760.1"/>
    <property type="molecule type" value="Genomic_DNA"/>
</dbReference>
<dbReference type="RefSeq" id="XP_015642843.1">
    <property type="nucleotide sequence ID" value="XM_015787357.1"/>
</dbReference>
<dbReference type="FunCoup" id="Q283L3">
    <property type="interactions" value="5"/>
</dbReference>
<dbReference type="PaxDb" id="39947-Q283L3"/>
<dbReference type="EnsemblPlants" id="Os06t0213700-01">
    <property type="protein sequence ID" value="Os06t0213700-01"/>
    <property type="gene ID" value="Os06g0213700"/>
</dbReference>
<dbReference type="Gramene" id="Os06t0213700-01">
    <property type="protein sequence ID" value="Os06t0213700-01"/>
    <property type="gene ID" value="Os06g0213700"/>
</dbReference>
<dbReference type="HOGENOM" id="CLU_062111_0_0_1"/>
<dbReference type="InParanoid" id="Q283L3"/>
<dbReference type="OMA" id="GCPSECK"/>
<dbReference type="OrthoDB" id="695210at2759"/>
<dbReference type="PlantReactome" id="R-OSA-9640760">
    <property type="pathway name" value="G1 phase"/>
</dbReference>
<dbReference type="Proteomes" id="UP000000763">
    <property type="component" value="Chromosome 6"/>
</dbReference>
<dbReference type="Proteomes" id="UP000059680">
    <property type="component" value="Chromosome 6"/>
</dbReference>
<dbReference type="GO" id="GO:0005634">
    <property type="term" value="C:nucleus"/>
    <property type="evidence" value="ECO:0007669"/>
    <property type="project" value="InterPro"/>
</dbReference>
<dbReference type="GO" id="GO:0004861">
    <property type="term" value="F:cyclin-dependent protein serine/threonine kinase inhibitor activity"/>
    <property type="evidence" value="ECO:0007669"/>
    <property type="project" value="InterPro"/>
</dbReference>
<dbReference type="GO" id="GO:0051726">
    <property type="term" value="P:regulation of cell cycle"/>
    <property type="evidence" value="ECO:0007669"/>
    <property type="project" value="InterPro"/>
</dbReference>
<dbReference type="Gene3D" id="4.10.365.10">
    <property type="entry name" value="p27"/>
    <property type="match status" value="1"/>
</dbReference>
<dbReference type="InterPro" id="IPR003175">
    <property type="entry name" value="CDI_dom"/>
</dbReference>
<dbReference type="InterPro" id="IPR044898">
    <property type="entry name" value="CDI_dom_sf"/>
</dbReference>
<dbReference type="InterPro" id="IPR044275">
    <property type="entry name" value="KRP"/>
</dbReference>
<dbReference type="PANTHER" id="PTHR46776">
    <property type="entry name" value="CYCLIN-DEPENDENT KINASE INHIBITOR 4-RELATED"/>
    <property type="match status" value="1"/>
</dbReference>
<dbReference type="Pfam" id="PF02234">
    <property type="entry name" value="CDI"/>
    <property type="match status" value="1"/>
</dbReference>
<feature type="chain" id="PRO_0000295665" description="Cyclin-dependent kinase inhibitor 2">
    <location>
        <begin position="1"/>
        <end position="249"/>
    </location>
</feature>
<feature type="region of interest" description="Disordered" evidence="1">
    <location>
        <begin position="118"/>
        <end position="180"/>
    </location>
</feature>
<feature type="compositionally biased region" description="Polar residues" evidence="1">
    <location>
        <begin position="161"/>
        <end position="180"/>
    </location>
</feature>
<name>KRP2_ORYSJ</name>
<accession>Q283L3</accession>
<accession>A0A0P0WUI6</accession>
<accession>Q69Y28</accession>
<gene>
    <name type="primary">KRP2</name>
    <name type="ordered locus">Os06g0213700</name>
    <name type="ordered locus">LOC_Os06g11050</name>
    <name type="ORF">P0537F07.1</name>
    <name type="ORF">P0701E03.40</name>
</gene>
<sequence>MGKKKKRDGAAARRQARVVVGGVRTRAAVTARRVVASAEEGCGLVGRGGGGGSGGDDGEGGCYLRLRSRRLPFVAAAVVSSRREEALGDSVAEAASSSSSRAVELLGCSGEEEAMAEKVCTQAGEDHDEESSVGDSGCGRERSATTPSSRRPPGDADSSDAESNQEAKQQMCRRSSTTSAAAFHAGATTRSFRMMAPPAAAAEIEEFLAAAERSEAERFAAKYNFDVVRGVPLDAGGAGRFEWTAVGSG</sequence>
<keyword id="KW-0649">Protein kinase inhibitor</keyword>
<keyword id="KW-1185">Reference proteome</keyword>
<evidence type="ECO:0000256" key="1">
    <source>
        <dbReference type="SAM" id="MobiDB-lite"/>
    </source>
</evidence>
<evidence type="ECO:0000305" key="2"/>